<sequence length="120" mass="13912">MQNISPKVQNQINMLQQMQQQMQTILSQKSQYELAAQEARRAVEELKETDDSAAVYMNVGTVVMQKPKSEVISKVTEKIETLEIRIRSIEKQEKMLQEKFEKLQSQVRSEIEGRKTPDAN</sequence>
<reference key="1">
    <citation type="journal article" date="2016" name="Stand. Genomic Sci.">
        <title>Complete genome sequence of Methanospirillum hungatei type strain JF1.</title>
        <authorList>
            <person name="Gunsalus R.P."/>
            <person name="Cook L.E."/>
            <person name="Crable B."/>
            <person name="Rohlin L."/>
            <person name="McDonald E."/>
            <person name="Mouttaki H."/>
            <person name="Sieber J.R."/>
            <person name="Poweleit N."/>
            <person name="Zhou H."/>
            <person name="Lapidus A.L."/>
            <person name="Daligault H.E."/>
            <person name="Land M."/>
            <person name="Gilna P."/>
            <person name="Ivanova N."/>
            <person name="Kyrpides N."/>
            <person name="Culley D.E."/>
            <person name="McInerney M.J."/>
        </authorList>
    </citation>
    <scope>NUCLEOTIDE SEQUENCE [LARGE SCALE GENOMIC DNA]</scope>
    <source>
        <strain>ATCC 27890 / DSM 864 / NBRC 100397 / JF-1</strain>
    </source>
</reference>
<gene>
    <name evidence="1" type="primary">pfdB</name>
    <name type="ordered locus">Mhun_2288</name>
</gene>
<feature type="chain" id="PRO_1000022792" description="Prefoldin subunit beta">
    <location>
        <begin position="1"/>
        <end position="120"/>
    </location>
</feature>
<accession>Q2FU56</accession>
<comment type="function">
    <text evidence="1">Molecular chaperone capable of stabilizing a range of proteins. Seems to fulfill an ATP-independent, HSP70-like function in archaeal de novo protein folding.</text>
</comment>
<comment type="subunit">
    <text evidence="1">Heterohexamer of two alpha and four beta subunits.</text>
</comment>
<comment type="subcellular location">
    <subcellularLocation>
        <location evidence="1">Cytoplasm</location>
    </subcellularLocation>
</comment>
<comment type="similarity">
    <text evidence="1">Belongs to the prefoldin subunit beta family.</text>
</comment>
<organism>
    <name type="scientific">Methanospirillum hungatei JF-1 (strain ATCC 27890 / DSM 864 / NBRC 100397 / JF-1)</name>
    <dbReference type="NCBI Taxonomy" id="323259"/>
    <lineage>
        <taxon>Archaea</taxon>
        <taxon>Methanobacteriati</taxon>
        <taxon>Methanobacteriota</taxon>
        <taxon>Stenosarchaea group</taxon>
        <taxon>Methanomicrobia</taxon>
        <taxon>Methanomicrobiales</taxon>
        <taxon>Methanospirillaceae</taxon>
        <taxon>Methanospirillum</taxon>
    </lineage>
</organism>
<dbReference type="EMBL" id="CP000254">
    <property type="protein sequence ID" value="ABD41993.1"/>
    <property type="molecule type" value="Genomic_DNA"/>
</dbReference>
<dbReference type="RefSeq" id="WP_011449251.1">
    <property type="nucleotide sequence ID" value="NC_007796.1"/>
</dbReference>
<dbReference type="SMR" id="Q2FU56"/>
<dbReference type="STRING" id="323259.Mhun_2288"/>
<dbReference type="EnsemblBacteria" id="ABD41993">
    <property type="protein sequence ID" value="ABD41993"/>
    <property type="gene ID" value="Mhun_2288"/>
</dbReference>
<dbReference type="GeneID" id="3921978"/>
<dbReference type="KEGG" id="mhu:Mhun_2288"/>
<dbReference type="eggNOG" id="arCOG01342">
    <property type="taxonomic scope" value="Archaea"/>
</dbReference>
<dbReference type="HOGENOM" id="CLU_131909_0_0_2"/>
<dbReference type="InParanoid" id="Q2FU56"/>
<dbReference type="OrthoDB" id="107608at2157"/>
<dbReference type="Proteomes" id="UP000001941">
    <property type="component" value="Chromosome"/>
</dbReference>
<dbReference type="GO" id="GO:0005737">
    <property type="term" value="C:cytoplasm"/>
    <property type="evidence" value="ECO:0007669"/>
    <property type="project" value="UniProtKB-SubCell"/>
</dbReference>
<dbReference type="GO" id="GO:0016272">
    <property type="term" value="C:prefoldin complex"/>
    <property type="evidence" value="ECO:0007669"/>
    <property type="project" value="UniProtKB-UniRule"/>
</dbReference>
<dbReference type="GO" id="GO:0051082">
    <property type="term" value="F:unfolded protein binding"/>
    <property type="evidence" value="ECO:0007669"/>
    <property type="project" value="UniProtKB-UniRule"/>
</dbReference>
<dbReference type="GO" id="GO:0006457">
    <property type="term" value="P:protein folding"/>
    <property type="evidence" value="ECO:0007669"/>
    <property type="project" value="UniProtKB-UniRule"/>
</dbReference>
<dbReference type="CDD" id="cd23162">
    <property type="entry name" value="Prefoldin_beta_GimC"/>
    <property type="match status" value="1"/>
</dbReference>
<dbReference type="Gene3D" id="1.10.287.370">
    <property type="match status" value="1"/>
</dbReference>
<dbReference type="HAMAP" id="MF_00307">
    <property type="entry name" value="PfdB"/>
    <property type="match status" value="1"/>
</dbReference>
<dbReference type="InterPro" id="IPR002777">
    <property type="entry name" value="PFD_beta-like"/>
</dbReference>
<dbReference type="InterPro" id="IPR012713">
    <property type="entry name" value="PfdB"/>
</dbReference>
<dbReference type="InterPro" id="IPR009053">
    <property type="entry name" value="Prefoldin"/>
</dbReference>
<dbReference type="NCBIfam" id="TIGR02338">
    <property type="entry name" value="gimC_beta"/>
    <property type="match status" value="1"/>
</dbReference>
<dbReference type="Pfam" id="PF01920">
    <property type="entry name" value="Prefoldin_2"/>
    <property type="match status" value="1"/>
</dbReference>
<dbReference type="SUPFAM" id="SSF46579">
    <property type="entry name" value="Prefoldin"/>
    <property type="match status" value="1"/>
</dbReference>
<name>PFDB_METHJ</name>
<proteinExistence type="inferred from homology"/>
<keyword id="KW-0143">Chaperone</keyword>
<keyword id="KW-0963">Cytoplasm</keyword>
<keyword id="KW-1185">Reference proteome</keyword>
<evidence type="ECO:0000255" key="1">
    <source>
        <dbReference type="HAMAP-Rule" id="MF_00307"/>
    </source>
</evidence>
<protein>
    <recommendedName>
        <fullName evidence="1">Prefoldin subunit beta</fullName>
    </recommendedName>
    <alternativeName>
        <fullName evidence="1">GimC subunit beta</fullName>
    </alternativeName>
</protein>